<accession>Q8CRL1</accession>
<feature type="initiator methionine" description="Removed" evidence="1">
    <location>
        <position position="1"/>
    </location>
</feature>
<feature type="chain" id="PRO_0000135385" description="Glutamine--fructose-6-phosphate aminotransferase [isomerizing]">
    <location>
        <begin position="2"/>
        <end position="601"/>
    </location>
</feature>
<feature type="domain" description="Glutamine amidotransferase type-2" evidence="1">
    <location>
        <begin position="2"/>
        <end position="218"/>
    </location>
</feature>
<feature type="domain" description="SIS 1" evidence="1">
    <location>
        <begin position="284"/>
        <end position="423"/>
    </location>
</feature>
<feature type="domain" description="SIS 2" evidence="1">
    <location>
        <begin position="453"/>
        <end position="591"/>
    </location>
</feature>
<feature type="active site" description="Nucleophile; for GATase activity" evidence="1">
    <location>
        <position position="2"/>
    </location>
</feature>
<feature type="active site" description="For Fru-6P isomerization activity" evidence="1">
    <location>
        <position position="596"/>
    </location>
</feature>
<comment type="function">
    <text evidence="1">Catalyzes the first step in hexosamine metabolism, converting fructose-6P into glucosamine-6P using glutamine as a nitrogen source.</text>
</comment>
<comment type="catalytic activity">
    <reaction evidence="1">
        <text>D-fructose 6-phosphate + L-glutamine = D-glucosamine 6-phosphate + L-glutamate</text>
        <dbReference type="Rhea" id="RHEA:13237"/>
        <dbReference type="ChEBI" id="CHEBI:29985"/>
        <dbReference type="ChEBI" id="CHEBI:58359"/>
        <dbReference type="ChEBI" id="CHEBI:58725"/>
        <dbReference type="ChEBI" id="CHEBI:61527"/>
        <dbReference type="EC" id="2.6.1.16"/>
    </reaction>
</comment>
<comment type="subunit">
    <text evidence="1">Homodimer.</text>
</comment>
<comment type="subcellular location">
    <subcellularLocation>
        <location evidence="1">Cytoplasm</location>
    </subcellularLocation>
</comment>
<keyword id="KW-0032">Aminotransferase</keyword>
<keyword id="KW-0963">Cytoplasm</keyword>
<keyword id="KW-0315">Glutamine amidotransferase</keyword>
<keyword id="KW-0677">Repeat</keyword>
<keyword id="KW-0808">Transferase</keyword>
<reference key="1">
    <citation type="journal article" date="2003" name="Mol. Microbiol.">
        <title>Genome-based analysis of virulence genes in a non-biofilm-forming Staphylococcus epidermidis strain (ATCC 12228).</title>
        <authorList>
            <person name="Zhang Y.-Q."/>
            <person name="Ren S.-X."/>
            <person name="Li H.-L."/>
            <person name="Wang Y.-X."/>
            <person name="Fu G."/>
            <person name="Yang J."/>
            <person name="Qin Z.-Q."/>
            <person name="Miao Y.-G."/>
            <person name="Wang W.-Y."/>
            <person name="Chen R.-S."/>
            <person name="Shen Y."/>
            <person name="Chen Z."/>
            <person name="Yuan Z.-H."/>
            <person name="Zhao G.-P."/>
            <person name="Qu D."/>
            <person name="Danchin A."/>
            <person name="Wen Y.-M."/>
        </authorList>
    </citation>
    <scope>NUCLEOTIDE SEQUENCE [LARGE SCALE GENOMIC DNA]</scope>
    <source>
        <strain>ATCC 12228 / FDA PCI 1200</strain>
    </source>
</reference>
<protein>
    <recommendedName>
        <fullName evidence="1">Glutamine--fructose-6-phosphate aminotransferase [isomerizing]</fullName>
        <ecNumber evidence="1">2.6.1.16</ecNumber>
    </recommendedName>
    <alternativeName>
        <fullName evidence="1">D-fructose-6-phosphate amidotransferase</fullName>
    </alternativeName>
    <alternativeName>
        <fullName evidence="1">GFAT</fullName>
    </alternativeName>
    <alternativeName>
        <fullName evidence="1">Glucosamine-6-phosphate synthase</fullName>
    </alternativeName>
    <alternativeName>
        <fullName evidence="1">Hexosephosphate aminotransferase</fullName>
    </alternativeName>
    <alternativeName>
        <fullName evidence="1">L-glutamine--D-fructose-6-phosphate amidotransferase</fullName>
    </alternativeName>
</protein>
<evidence type="ECO:0000255" key="1">
    <source>
        <dbReference type="HAMAP-Rule" id="MF_00164"/>
    </source>
</evidence>
<proteinExistence type="inferred from homology"/>
<dbReference type="EC" id="2.6.1.16" evidence="1"/>
<dbReference type="EMBL" id="AE015929">
    <property type="protein sequence ID" value="AAO05350.1"/>
    <property type="molecule type" value="Genomic_DNA"/>
</dbReference>
<dbReference type="RefSeq" id="NP_765306.1">
    <property type="nucleotide sequence ID" value="NC_004461.1"/>
</dbReference>
<dbReference type="RefSeq" id="WP_001829889.1">
    <property type="nucleotide sequence ID" value="NZ_WBME01000065.1"/>
</dbReference>
<dbReference type="SMR" id="Q8CRL1"/>
<dbReference type="GeneID" id="50018152"/>
<dbReference type="KEGG" id="sep:SE_1751"/>
<dbReference type="PATRIC" id="fig|176280.10.peg.1710"/>
<dbReference type="eggNOG" id="COG0449">
    <property type="taxonomic scope" value="Bacteria"/>
</dbReference>
<dbReference type="HOGENOM" id="CLU_012520_7_1_9"/>
<dbReference type="OrthoDB" id="106547at2"/>
<dbReference type="Proteomes" id="UP000001411">
    <property type="component" value="Chromosome"/>
</dbReference>
<dbReference type="GO" id="GO:0005829">
    <property type="term" value="C:cytosol"/>
    <property type="evidence" value="ECO:0007669"/>
    <property type="project" value="TreeGrafter"/>
</dbReference>
<dbReference type="GO" id="GO:0097367">
    <property type="term" value="F:carbohydrate derivative binding"/>
    <property type="evidence" value="ECO:0007669"/>
    <property type="project" value="InterPro"/>
</dbReference>
<dbReference type="GO" id="GO:0004360">
    <property type="term" value="F:glutamine-fructose-6-phosphate transaminase (isomerizing) activity"/>
    <property type="evidence" value="ECO:0007669"/>
    <property type="project" value="UniProtKB-UniRule"/>
</dbReference>
<dbReference type="GO" id="GO:0005975">
    <property type="term" value="P:carbohydrate metabolic process"/>
    <property type="evidence" value="ECO:0007669"/>
    <property type="project" value="UniProtKB-UniRule"/>
</dbReference>
<dbReference type="GO" id="GO:0006002">
    <property type="term" value="P:fructose 6-phosphate metabolic process"/>
    <property type="evidence" value="ECO:0007669"/>
    <property type="project" value="TreeGrafter"/>
</dbReference>
<dbReference type="GO" id="GO:0006487">
    <property type="term" value="P:protein N-linked glycosylation"/>
    <property type="evidence" value="ECO:0007669"/>
    <property type="project" value="TreeGrafter"/>
</dbReference>
<dbReference type="GO" id="GO:0006047">
    <property type="term" value="P:UDP-N-acetylglucosamine metabolic process"/>
    <property type="evidence" value="ECO:0007669"/>
    <property type="project" value="TreeGrafter"/>
</dbReference>
<dbReference type="CDD" id="cd00714">
    <property type="entry name" value="GFAT"/>
    <property type="match status" value="1"/>
</dbReference>
<dbReference type="CDD" id="cd05008">
    <property type="entry name" value="SIS_GlmS_GlmD_1"/>
    <property type="match status" value="1"/>
</dbReference>
<dbReference type="CDD" id="cd05009">
    <property type="entry name" value="SIS_GlmS_GlmD_2"/>
    <property type="match status" value="1"/>
</dbReference>
<dbReference type="FunFam" id="3.40.50.10490:FF:000001">
    <property type="entry name" value="Glutamine--fructose-6-phosphate aminotransferase [isomerizing]"/>
    <property type="match status" value="1"/>
</dbReference>
<dbReference type="FunFam" id="3.40.50.10490:FF:000022">
    <property type="entry name" value="Glutamine--fructose-6-phosphate aminotransferase [isomerizing]"/>
    <property type="match status" value="1"/>
</dbReference>
<dbReference type="FunFam" id="3.60.20.10:FF:000006">
    <property type="entry name" value="Glutamine--fructose-6-phosphate aminotransferase [isomerizing]"/>
    <property type="match status" value="1"/>
</dbReference>
<dbReference type="Gene3D" id="3.40.50.10490">
    <property type="entry name" value="Glucose-6-phosphate isomerase like protein, domain 1"/>
    <property type="match status" value="2"/>
</dbReference>
<dbReference type="Gene3D" id="3.60.20.10">
    <property type="entry name" value="Glutamine Phosphoribosylpyrophosphate, subunit 1, domain 1"/>
    <property type="match status" value="1"/>
</dbReference>
<dbReference type="HAMAP" id="MF_00164">
    <property type="entry name" value="GlmS"/>
    <property type="match status" value="1"/>
</dbReference>
<dbReference type="InterPro" id="IPR017932">
    <property type="entry name" value="GATase_2_dom"/>
</dbReference>
<dbReference type="InterPro" id="IPR005855">
    <property type="entry name" value="GFAT"/>
</dbReference>
<dbReference type="InterPro" id="IPR047084">
    <property type="entry name" value="GFAT_N"/>
</dbReference>
<dbReference type="InterPro" id="IPR035466">
    <property type="entry name" value="GlmS/AgaS_SIS"/>
</dbReference>
<dbReference type="InterPro" id="IPR035490">
    <property type="entry name" value="GlmS/FrlB_SIS"/>
</dbReference>
<dbReference type="InterPro" id="IPR029055">
    <property type="entry name" value="Ntn_hydrolases_N"/>
</dbReference>
<dbReference type="InterPro" id="IPR001347">
    <property type="entry name" value="SIS_dom"/>
</dbReference>
<dbReference type="InterPro" id="IPR046348">
    <property type="entry name" value="SIS_dom_sf"/>
</dbReference>
<dbReference type="NCBIfam" id="TIGR01135">
    <property type="entry name" value="glmS"/>
    <property type="match status" value="1"/>
</dbReference>
<dbReference type="NCBIfam" id="NF001484">
    <property type="entry name" value="PRK00331.1"/>
    <property type="match status" value="1"/>
</dbReference>
<dbReference type="PANTHER" id="PTHR10937">
    <property type="entry name" value="GLUCOSAMINE--FRUCTOSE-6-PHOSPHATE AMINOTRANSFERASE, ISOMERIZING"/>
    <property type="match status" value="1"/>
</dbReference>
<dbReference type="PANTHER" id="PTHR10937:SF0">
    <property type="entry name" value="GLUTAMINE--FRUCTOSE-6-PHOSPHATE TRANSAMINASE (ISOMERIZING)"/>
    <property type="match status" value="1"/>
</dbReference>
<dbReference type="Pfam" id="PF13522">
    <property type="entry name" value="GATase_6"/>
    <property type="match status" value="1"/>
</dbReference>
<dbReference type="Pfam" id="PF01380">
    <property type="entry name" value="SIS"/>
    <property type="match status" value="2"/>
</dbReference>
<dbReference type="SUPFAM" id="SSF56235">
    <property type="entry name" value="N-terminal nucleophile aminohydrolases (Ntn hydrolases)"/>
    <property type="match status" value="1"/>
</dbReference>
<dbReference type="SUPFAM" id="SSF53697">
    <property type="entry name" value="SIS domain"/>
    <property type="match status" value="1"/>
</dbReference>
<dbReference type="PROSITE" id="PS51278">
    <property type="entry name" value="GATASE_TYPE_2"/>
    <property type="match status" value="1"/>
</dbReference>
<dbReference type="PROSITE" id="PS51464">
    <property type="entry name" value="SIS"/>
    <property type="match status" value="2"/>
</dbReference>
<gene>
    <name evidence="1" type="primary">glmS</name>
    <name type="ordered locus">SE_1751</name>
</gene>
<organism>
    <name type="scientific">Staphylococcus epidermidis (strain ATCC 12228 / FDA PCI 1200)</name>
    <dbReference type="NCBI Taxonomy" id="176280"/>
    <lineage>
        <taxon>Bacteria</taxon>
        <taxon>Bacillati</taxon>
        <taxon>Bacillota</taxon>
        <taxon>Bacilli</taxon>
        <taxon>Bacillales</taxon>
        <taxon>Staphylococcaceae</taxon>
        <taxon>Staphylococcus</taxon>
    </lineage>
</organism>
<sequence>MCGIVGYIGYDNAKELLLKGLEKLEYRGYDSAGIAVVNDDGTKLFKEKGRIAELRKVADNSDEDGTLGIGHTRWATHGVPNYENSHPHQSTSGRFTLVHNGVIENYEELKAEYLSDVTFSSETDTEVIVQLVDYFSRQGLATEDAFTKVVKLLHGSYALGLLDDNDKDTIYVAKNKSPLLVGVGEGFNVIASDALAMLQTTNQYKEIHDHEIVIVKRDTVEIKDLEGHIQQRDTYTAEIDAADAEKGVYDHYMLKEIHEQPAVMRRIIQEYQDEKGNLKIDSEIINDVADADRIYIVAAGTSYHAGLVGKEFIEKWAGVPTEVHVASEFVYNMPLLSEKPLFIYISQSGETADSRAVLVETNKLGHKSLTITNVAGSTLSREADHTLLLHAGPEIAVASTKAYTAQIAVLSILSQIVAKNHGRETDVDLLRELAKVTTAIETIVDDAPKMEQIATDFLKTTRNAFFIGRTIDYNVSLEGALKLKEISYIQAEGFAGGELKHGTIALIEDGTPVIGLATQENVNLSIRGNMKEVVARGAYPCMISMEGLNKEGDTYVIPQVHELLTPLVSVVTMQLISYYAALQRDLDVDKPRNLAKSVTVE</sequence>
<name>GLMS_STAES</name>